<dbReference type="EC" id="3.13.2.1" evidence="1"/>
<dbReference type="EMBL" id="AE016958">
    <property type="protein sequence ID" value="AAS05912.1"/>
    <property type="molecule type" value="Genomic_DNA"/>
</dbReference>
<dbReference type="RefSeq" id="WP_003878944.1">
    <property type="nucleotide sequence ID" value="NZ_CP106873.1"/>
</dbReference>
<dbReference type="SMR" id="Q73UK6"/>
<dbReference type="STRING" id="262316.MAP_3362c"/>
<dbReference type="KEGG" id="mpa:MAP_3362c"/>
<dbReference type="PATRIC" id="fig|262316.17.peg.3574"/>
<dbReference type="eggNOG" id="COG0499">
    <property type="taxonomic scope" value="Bacteria"/>
</dbReference>
<dbReference type="HOGENOM" id="CLU_025194_2_1_11"/>
<dbReference type="UniPathway" id="UPA00314">
    <property type="reaction ID" value="UER00076"/>
</dbReference>
<dbReference type="Proteomes" id="UP000000580">
    <property type="component" value="Chromosome"/>
</dbReference>
<dbReference type="GO" id="GO:0005829">
    <property type="term" value="C:cytosol"/>
    <property type="evidence" value="ECO:0007669"/>
    <property type="project" value="TreeGrafter"/>
</dbReference>
<dbReference type="GO" id="GO:0004013">
    <property type="term" value="F:adenosylhomocysteinase activity"/>
    <property type="evidence" value="ECO:0007669"/>
    <property type="project" value="UniProtKB-UniRule"/>
</dbReference>
<dbReference type="GO" id="GO:0071269">
    <property type="term" value="P:L-homocysteine biosynthetic process"/>
    <property type="evidence" value="ECO:0007669"/>
    <property type="project" value="UniProtKB-UniRule"/>
</dbReference>
<dbReference type="GO" id="GO:0006730">
    <property type="term" value="P:one-carbon metabolic process"/>
    <property type="evidence" value="ECO:0007669"/>
    <property type="project" value="UniProtKB-KW"/>
</dbReference>
<dbReference type="GO" id="GO:0033353">
    <property type="term" value="P:S-adenosylmethionine cycle"/>
    <property type="evidence" value="ECO:0007669"/>
    <property type="project" value="TreeGrafter"/>
</dbReference>
<dbReference type="CDD" id="cd00401">
    <property type="entry name" value="SAHH"/>
    <property type="match status" value="1"/>
</dbReference>
<dbReference type="FunFam" id="3.40.50.720:FF:000004">
    <property type="entry name" value="Adenosylhomocysteinase"/>
    <property type="match status" value="1"/>
</dbReference>
<dbReference type="Gene3D" id="3.40.50.1480">
    <property type="entry name" value="Adenosylhomocysteinase-like"/>
    <property type="match status" value="1"/>
</dbReference>
<dbReference type="Gene3D" id="3.40.50.720">
    <property type="entry name" value="NAD(P)-binding Rossmann-like Domain"/>
    <property type="match status" value="1"/>
</dbReference>
<dbReference type="HAMAP" id="MF_00563">
    <property type="entry name" value="AdoHcyase"/>
    <property type="match status" value="1"/>
</dbReference>
<dbReference type="InterPro" id="IPR042172">
    <property type="entry name" value="Adenosylhomocyst_ase-like_sf"/>
</dbReference>
<dbReference type="InterPro" id="IPR000043">
    <property type="entry name" value="Adenosylhomocysteinase-like"/>
</dbReference>
<dbReference type="InterPro" id="IPR015878">
    <property type="entry name" value="Ado_hCys_hydrolase_NAD-bd"/>
</dbReference>
<dbReference type="InterPro" id="IPR036291">
    <property type="entry name" value="NAD(P)-bd_dom_sf"/>
</dbReference>
<dbReference type="InterPro" id="IPR020082">
    <property type="entry name" value="S-Ado-L-homoCys_hydrolase_CS"/>
</dbReference>
<dbReference type="NCBIfam" id="TIGR00936">
    <property type="entry name" value="ahcY"/>
    <property type="match status" value="1"/>
</dbReference>
<dbReference type="NCBIfam" id="NF004005">
    <property type="entry name" value="PRK05476.2-3"/>
    <property type="match status" value="1"/>
</dbReference>
<dbReference type="PANTHER" id="PTHR23420">
    <property type="entry name" value="ADENOSYLHOMOCYSTEINASE"/>
    <property type="match status" value="1"/>
</dbReference>
<dbReference type="PANTHER" id="PTHR23420:SF0">
    <property type="entry name" value="ADENOSYLHOMOCYSTEINASE"/>
    <property type="match status" value="1"/>
</dbReference>
<dbReference type="Pfam" id="PF05221">
    <property type="entry name" value="AdoHcyase"/>
    <property type="match status" value="1"/>
</dbReference>
<dbReference type="Pfam" id="PF00670">
    <property type="entry name" value="AdoHcyase_NAD"/>
    <property type="match status" value="1"/>
</dbReference>
<dbReference type="PIRSF" id="PIRSF001109">
    <property type="entry name" value="Ad_hcy_hydrolase"/>
    <property type="match status" value="1"/>
</dbReference>
<dbReference type="SMART" id="SM00996">
    <property type="entry name" value="AdoHcyase"/>
    <property type="match status" value="1"/>
</dbReference>
<dbReference type="SMART" id="SM00997">
    <property type="entry name" value="AdoHcyase_NAD"/>
    <property type="match status" value="1"/>
</dbReference>
<dbReference type="SUPFAM" id="SSF52283">
    <property type="entry name" value="Formate/glycerate dehydrogenase catalytic domain-like"/>
    <property type="match status" value="1"/>
</dbReference>
<dbReference type="SUPFAM" id="SSF51735">
    <property type="entry name" value="NAD(P)-binding Rossmann-fold domains"/>
    <property type="match status" value="1"/>
</dbReference>
<dbReference type="PROSITE" id="PS00738">
    <property type="entry name" value="ADOHCYASE_1"/>
    <property type="match status" value="1"/>
</dbReference>
<evidence type="ECO:0000255" key="1">
    <source>
        <dbReference type="HAMAP-Rule" id="MF_00563"/>
    </source>
</evidence>
<proteinExistence type="inferred from homology"/>
<feature type="chain" id="PRO_0000116970" description="Adenosylhomocysteinase">
    <location>
        <begin position="1"/>
        <end position="496"/>
    </location>
</feature>
<feature type="binding site" evidence="1">
    <location>
        <position position="68"/>
    </location>
    <ligand>
        <name>substrate</name>
    </ligand>
</feature>
<feature type="binding site" evidence="1">
    <location>
        <position position="157"/>
    </location>
    <ligand>
        <name>substrate</name>
    </ligand>
</feature>
<feature type="binding site" evidence="1">
    <location>
        <position position="219"/>
    </location>
    <ligand>
        <name>substrate</name>
    </ligand>
</feature>
<feature type="binding site" evidence="1">
    <location>
        <begin position="220"/>
        <end position="222"/>
    </location>
    <ligand>
        <name>NAD(+)</name>
        <dbReference type="ChEBI" id="CHEBI:57540"/>
    </ligand>
</feature>
<feature type="binding site" evidence="1">
    <location>
        <position position="249"/>
    </location>
    <ligand>
        <name>substrate</name>
    </ligand>
</feature>
<feature type="binding site" evidence="1">
    <location>
        <position position="253"/>
    </location>
    <ligand>
        <name>substrate</name>
    </ligand>
</feature>
<feature type="binding site" evidence="1">
    <location>
        <position position="254"/>
    </location>
    <ligand>
        <name>NAD(+)</name>
        <dbReference type="ChEBI" id="CHEBI:57540"/>
    </ligand>
</feature>
<feature type="binding site" evidence="1">
    <location>
        <begin position="283"/>
        <end position="288"/>
    </location>
    <ligand>
        <name>NAD(+)</name>
        <dbReference type="ChEBI" id="CHEBI:57540"/>
    </ligand>
</feature>
<feature type="binding site" evidence="1">
    <location>
        <position position="306"/>
    </location>
    <ligand>
        <name>NAD(+)</name>
        <dbReference type="ChEBI" id="CHEBI:57540"/>
    </ligand>
</feature>
<feature type="binding site" evidence="1">
    <location>
        <position position="341"/>
    </location>
    <ligand>
        <name>NAD(+)</name>
        <dbReference type="ChEBI" id="CHEBI:57540"/>
    </ligand>
</feature>
<feature type="binding site" evidence="1">
    <location>
        <begin position="362"/>
        <end position="364"/>
    </location>
    <ligand>
        <name>NAD(+)</name>
        <dbReference type="ChEBI" id="CHEBI:57540"/>
    </ligand>
</feature>
<feature type="binding site" evidence="1">
    <location>
        <position position="410"/>
    </location>
    <ligand>
        <name>NAD(+)</name>
        <dbReference type="ChEBI" id="CHEBI:57540"/>
    </ligand>
</feature>
<accession>Q73UK6</accession>
<reference key="1">
    <citation type="journal article" date="2005" name="Proc. Natl. Acad. Sci. U.S.A.">
        <title>The complete genome sequence of Mycobacterium avium subspecies paratuberculosis.</title>
        <authorList>
            <person name="Li L."/>
            <person name="Bannantine J.P."/>
            <person name="Zhang Q."/>
            <person name="Amonsin A."/>
            <person name="May B.J."/>
            <person name="Alt D."/>
            <person name="Banerji N."/>
            <person name="Kanjilal S."/>
            <person name="Kapur V."/>
        </authorList>
    </citation>
    <scope>NUCLEOTIDE SEQUENCE [LARGE SCALE GENOMIC DNA]</scope>
    <source>
        <strain>ATCC BAA-968 / K-10</strain>
    </source>
</reference>
<organism>
    <name type="scientific">Mycolicibacterium paratuberculosis (strain ATCC BAA-968 / K-10)</name>
    <name type="common">Mycobacterium paratuberculosis</name>
    <dbReference type="NCBI Taxonomy" id="262316"/>
    <lineage>
        <taxon>Bacteria</taxon>
        <taxon>Bacillati</taxon>
        <taxon>Actinomycetota</taxon>
        <taxon>Actinomycetes</taxon>
        <taxon>Mycobacteriales</taxon>
        <taxon>Mycobacteriaceae</taxon>
        <taxon>Mycobacterium</taxon>
        <taxon>Mycobacterium avium complex (MAC)</taxon>
    </lineage>
</organism>
<gene>
    <name evidence="1" type="primary">ahcY</name>
    <name type="synonym">sahH</name>
    <name type="ordered locus">MAP_3362c</name>
</gene>
<comment type="function">
    <text evidence="1">May play a key role in the regulation of the intracellular concentration of adenosylhomocysteine.</text>
</comment>
<comment type="catalytic activity">
    <reaction evidence="1">
        <text>S-adenosyl-L-homocysteine + H2O = L-homocysteine + adenosine</text>
        <dbReference type="Rhea" id="RHEA:21708"/>
        <dbReference type="ChEBI" id="CHEBI:15377"/>
        <dbReference type="ChEBI" id="CHEBI:16335"/>
        <dbReference type="ChEBI" id="CHEBI:57856"/>
        <dbReference type="ChEBI" id="CHEBI:58199"/>
        <dbReference type="EC" id="3.13.2.1"/>
    </reaction>
</comment>
<comment type="cofactor">
    <cofactor evidence="1">
        <name>NAD(+)</name>
        <dbReference type="ChEBI" id="CHEBI:57540"/>
    </cofactor>
    <text evidence="1">Binds 1 NAD(+) per subunit.</text>
</comment>
<comment type="pathway">
    <text evidence="1">Amino-acid biosynthesis; L-homocysteine biosynthesis; L-homocysteine from S-adenosyl-L-homocysteine: step 1/1.</text>
</comment>
<comment type="subcellular location">
    <subcellularLocation>
        <location evidence="1">Cytoplasm</location>
    </subcellularLocation>
</comment>
<comment type="similarity">
    <text evidence="1">Belongs to the adenosylhomocysteinase family.</text>
</comment>
<sequence>MTTTENALTPDVRNGIEFKVADLSLADYGRRDIELSEQEMPGLMSLRREYHDVQPLKGARISGSLHMTVQTAVLIETLVALGAEVRWASCNIFSTQDHAAAAVVVGPHGTPEEPRGVPVFAWKGETLEEYWWAAEQALTWPPLADGTEAPANMILDDGGDATMLVLRGAQYEKAGVVPPDDEDDSAEHRVFLNLLRARFETDKTKWTKISESIKGVTEETTTGVLRLYQFAAAGDLAFPAINVNDSVTKSKFDNKYGCRHSLIDGINRGTDVLIGGKNVLVCGYGDVGKGSVESLAGQGARVTVTEIDPINALQALMEGYNVKRVEDVIGEADIVITATGNKDIITLEHMKAMKDKAILGNIGHFDNEIQIARLEKSGAIKTNIRPQVDLWTFPDTGKSIIVLSEGRLLNLGNATGHPSFVMSNSFSNQVIAQIELWTKNDEYDNEVYRLPKHLDEKVARIHVEALGGELTKLTKEQAEYIGVDVDGPYKADHYRY</sequence>
<protein>
    <recommendedName>
        <fullName evidence="1">Adenosylhomocysteinase</fullName>
        <ecNumber evidence="1">3.13.2.1</ecNumber>
    </recommendedName>
    <alternativeName>
        <fullName evidence="1">S-adenosyl-L-homocysteine hydrolase</fullName>
        <shortName evidence="1">AdoHcyase</shortName>
    </alternativeName>
</protein>
<name>SAHH_MYCPA</name>
<keyword id="KW-0963">Cytoplasm</keyword>
<keyword id="KW-0378">Hydrolase</keyword>
<keyword id="KW-0520">NAD</keyword>
<keyword id="KW-0554">One-carbon metabolism</keyword>
<keyword id="KW-1185">Reference proteome</keyword>